<proteinExistence type="inferred from homology"/>
<keyword id="KW-0131">Cell cycle</keyword>
<keyword id="KW-0132">Cell division</keyword>
<keyword id="KW-0997">Cell inner membrane</keyword>
<keyword id="KW-1003">Cell membrane</keyword>
<keyword id="KW-0472">Membrane</keyword>
<keyword id="KW-0812">Transmembrane</keyword>
<keyword id="KW-1133">Transmembrane helix</keyword>
<evidence type="ECO:0000255" key="1">
    <source>
        <dbReference type="HAMAP-Rule" id="MF_00509"/>
    </source>
</evidence>
<evidence type="ECO:0000256" key="2">
    <source>
        <dbReference type="SAM" id="MobiDB-lite"/>
    </source>
</evidence>
<dbReference type="EMBL" id="CP000058">
    <property type="protein sequence ID" value="AAZ35706.1"/>
    <property type="molecule type" value="Genomic_DNA"/>
</dbReference>
<dbReference type="RefSeq" id="WP_004665852.1">
    <property type="nucleotide sequence ID" value="NC_005773.3"/>
</dbReference>
<dbReference type="SMR" id="Q48KR3"/>
<dbReference type="GeneID" id="69858724"/>
<dbReference type="KEGG" id="psp:PSPPH_1778"/>
<dbReference type="eggNOG" id="COG3115">
    <property type="taxonomic scope" value="Bacteria"/>
</dbReference>
<dbReference type="HOGENOM" id="CLU_030174_0_1_6"/>
<dbReference type="Proteomes" id="UP000000551">
    <property type="component" value="Chromosome"/>
</dbReference>
<dbReference type="GO" id="GO:0032153">
    <property type="term" value="C:cell division site"/>
    <property type="evidence" value="ECO:0007669"/>
    <property type="project" value="UniProtKB-UniRule"/>
</dbReference>
<dbReference type="GO" id="GO:0005886">
    <property type="term" value="C:plasma membrane"/>
    <property type="evidence" value="ECO:0007669"/>
    <property type="project" value="UniProtKB-SubCell"/>
</dbReference>
<dbReference type="GO" id="GO:0000917">
    <property type="term" value="P:division septum assembly"/>
    <property type="evidence" value="ECO:0007669"/>
    <property type="project" value="TreeGrafter"/>
</dbReference>
<dbReference type="GO" id="GO:0043093">
    <property type="term" value="P:FtsZ-dependent cytokinesis"/>
    <property type="evidence" value="ECO:0007669"/>
    <property type="project" value="UniProtKB-UniRule"/>
</dbReference>
<dbReference type="Gene3D" id="3.30.1400.10">
    <property type="entry name" value="ZipA, C-terminal FtsZ-binding domain"/>
    <property type="match status" value="1"/>
</dbReference>
<dbReference type="HAMAP" id="MF_00509">
    <property type="entry name" value="ZipA"/>
    <property type="match status" value="1"/>
</dbReference>
<dbReference type="InterPro" id="IPR011919">
    <property type="entry name" value="Cell_div_ZipA"/>
</dbReference>
<dbReference type="InterPro" id="IPR007449">
    <property type="entry name" value="ZipA_FtsZ-bd_C"/>
</dbReference>
<dbReference type="InterPro" id="IPR036765">
    <property type="entry name" value="ZipA_FtsZ-bd_C_sf"/>
</dbReference>
<dbReference type="NCBIfam" id="TIGR02205">
    <property type="entry name" value="septum_zipA"/>
    <property type="match status" value="1"/>
</dbReference>
<dbReference type="PANTHER" id="PTHR38685">
    <property type="entry name" value="CELL DIVISION PROTEIN ZIPA"/>
    <property type="match status" value="1"/>
</dbReference>
<dbReference type="PANTHER" id="PTHR38685:SF1">
    <property type="entry name" value="CELL DIVISION PROTEIN ZIPA"/>
    <property type="match status" value="1"/>
</dbReference>
<dbReference type="Pfam" id="PF04354">
    <property type="entry name" value="ZipA_C"/>
    <property type="match status" value="1"/>
</dbReference>
<dbReference type="SMART" id="SM00771">
    <property type="entry name" value="ZipA_C"/>
    <property type="match status" value="1"/>
</dbReference>
<dbReference type="SUPFAM" id="SSF64383">
    <property type="entry name" value="Cell-division protein ZipA, C-terminal domain"/>
    <property type="match status" value="1"/>
</dbReference>
<feature type="chain" id="PRO_0000237131" description="Cell division protein ZipA">
    <location>
        <begin position="1"/>
        <end position="289"/>
    </location>
</feature>
<feature type="topological domain" description="Periplasmic" evidence="1">
    <location>
        <position position="1"/>
    </location>
</feature>
<feature type="transmembrane region" description="Helical" evidence="1">
    <location>
        <begin position="2"/>
        <end position="22"/>
    </location>
</feature>
<feature type="topological domain" description="Cytoplasmic" evidence="1">
    <location>
        <begin position="23"/>
        <end position="289"/>
    </location>
</feature>
<feature type="region of interest" description="Disordered" evidence="2">
    <location>
        <begin position="48"/>
        <end position="141"/>
    </location>
</feature>
<feature type="compositionally biased region" description="Basic and acidic residues" evidence="2">
    <location>
        <begin position="64"/>
        <end position="77"/>
    </location>
</feature>
<feature type="compositionally biased region" description="Basic and acidic residues" evidence="2">
    <location>
        <begin position="85"/>
        <end position="106"/>
    </location>
</feature>
<feature type="compositionally biased region" description="Basic and acidic residues" evidence="2">
    <location>
        <begin position="123"/>
        <end position="141"/>
    </location>
</feature>
<accession>Q48KR3</accession>
<comment type="function">
    <text evidence="1">Essential cell division protein that stabilizes the FtsZ protofilaments by cross-linking them and that serves as a cytoplasmic membrane anchor for the Z ring. Also required for the recruitment to the septal ring of downstream cell division proteins.</text>
</comment>
<comment type="subunit">
    <text evidence="1">Interacts with FtsZ via their C-terminal domains.</text>
</comment>
<comment type="subcellular location">
    <subcellularLocation>
        <location evidence="1">Cell inner membrane</location>
        <topology evidence="1">Single-pass type I membrane protein</topology>
    </subcellularLocation>
    <text evidence="1">Localizes to the Z ring in an FtsZ-dependent manner.</text>
</comment>
<comment type="similarity">
    <text evidence="1">Belongs to the ZipA family.</text>
</comment>
<protein>
    <recommendedName>
        <fullName evidence="1">Cell division protein ZipA</fullName>
    </recommendedName>
</protein>
<sequence length="289" mass="32553">MEIGLREWLIVIGIIVIAGILFDGWRRMRGSKGKLKFRLDRSFSNLPDEEETTSAEVLGPPRVLDTHKEPQLDEHDLPSMSASPREGKRSNSDKRGNSDKKRKDEPQQGDLNLDLDGPSLFTGRDDDFPDDKPAQRITEDKDLPPVEEVLVISVISRSEGGFKGPALLQNILESGLRFGEMDIFHRHESMAGNGEVLFSMANAVKPGVFDLDDIDHFSTRAVSFFLGLPGPRHPKQAFDVMVAAARKLAHELDGELKDDQRSVMTAQTIEHYRQRIVEFERRALTQRRG</sequence>
<gene>
    <name evidence="1" type="primary">zipA</name>
    <name type="ordered locus">PSPPH_1778</name>
</gene>
<name>ZIPA_PSE14</name>
<organism>
    <name type="scientific">Pseudomonas savastanoi pv. phaseolicola (strain 1448A / Race 6)</name>
    <name type="common">Pseudomonas syringae pv. phaseolicola (strain 1448A / Race 6)</name>
    <dbReference type="NCBI Taxonomy" id="264730"/>
    <lineage>
        <taxon>Bacteria</taxon>
        <taxon>Pseudomonadati</taxon>
        <taxon>Pseudomonadota</taxon>
        <taxon>Gammaproteobacteria</taxon>
        <taxon>Pseudomonadales</taxon>
        <taxon>Pseudomonadaceae</taxon>
        <taxon>Pseudomonas</taxon>
    </lineage>
</organism>
<reference key="1">
    <citation type="journal article" date="2005" name="J. Bacteriol.">
        <title>Whole-genome sequence analysis of Pseudomonas syringae pv. phaseolicola 1448A reveals divergence among pathovars in genes involved in virulence and transposition.</title>
        <authorList>
            <person name="Joardar V."/>
            <person name="Lindeberg M."/>
            <person name="Jackson R.W."/>
            <person name="Selengut J."/>
            <person name="Dodson R."/>
            <person name="Brinkac L.M."/>
            <person name="Daugherty S.C."/>
            <person name="DeBoy R.T."/>
            <person name="Durkin A.S."/>
            <person name="Gwinn Giglio M."/>
            <person name="Madupu R."/>
            <person name="Nelson W.C."/>
            <person name="Rosovitz M.J."/>
            <person name="Sullivan S.A."/>
            <person name="Crabtree J."/>
            <person name="Creasy T."/>
            <person name="Davidsen T.M."/>
            <person name="Haft D.H."/>
            <person name="Zafar N."/>
            <person name="Zhou L."/>
            <person name="Halpin R."/>
            <person name="Holley T."/>
            <person name="Khouri H.M."/>
            <person name="Feldblyum T.V."/>
            <person name="White O."/>
            <person name="Fraser C.M."/>
            <person name="Chatterjee A.K."/>
            <person name="Cartinhour S."/>
            <person name="Schneider D."/>
            <person name="Mansfield J.W."/>
            <person name="Collmer A."/>
            <person name="Buell R."/>
        </authorList>
    </citation>
    <scope>NUCLEOTIDE SEQUENCE [LARGE SCALE GENOMIC DNA]</scope>
    <source>
        <strain>1448A / Race 6</strain>
    </source>
</reference>